<organism>
    <name type="scientific">Leptosphaeria maculans</name>
    <name type="common">Blackleg fungus</name>
    <name type="synonym">Phoma lingam</name>
    <dbReference type="NCBI Taxonomy" id="5022"/>
    <lineage>
        <taxon>Eukaryota</taxon>
        <taxon>Fungi</taxon>
        <taxon>Dikarya</taxon>
        <taxon>Ascomycota</taxon>
        <taxon>Pezizomycotina</taxon>
        <taxon>Dothideomycetes</taxon>
        <taxon>Pleosporomycetidae</taxon>
        <taxon>Pleosporales</taxon>
        <taxon>Pleosporineae</taxon>
        <taxon>Leptosphaeriaceae</taxon>
        <taxon>Plenodomus</taxon>
        <taxon>Plenodomus lingam/Leptosphaeria maculans species complex</taxon>
    </lineage>
</organism>
<keyword id="KW-0521">NADP</keyword>
<keyword id="KW-0560">Oxidoreductase</keyword>
<keyword id="KW-0843">Virulence</keyword>
<evidence type="ECO:0000250" key="1">
    <source>
        <dbReference type="UniProtKB" id="L0E2Z4"/>
    </source>
</evidence>
<evidence type="ECO:0000250" key="2">
    <source>
        <dbReference type="UniProtKB" id="O93868"/>
    </source>
</evidence>
<evidence type="ECO:0000256" key="3">
    <source>
        <dbReference type="SAM" id="MobiDB-lite"/>
    </source>
</evidence>
<evidence type="ECO:0000269" key="4">
    <source>
    </source>
</evidence>
<evidence type="ECO:0000269" key="5">
    <source>
    </source>
</evidence>
<evidence type="ECO:0000269" key="6">
    <source>
    </source>
</evidence>
<evidence type="ECO:0000269" key="7">
    <source>
    </source>
</evidence>
<evidence type="ECO:0000303" key="8">
    <source>
    </source>
</evidence>
<evidence type="ECO:0000305" key="9"/>
<evidence type="ECO:0000305" key="10">
    <source>
    </source>
</evidence>
<evidence type="ECO:0000305" key="11">
    <source>
    </source>
</evidence>
<accession>Q6Q878</accession>
<name>SIRS_LEPMC</name>
<comment type="function">
    <text evidence="4 5 6 7 10 11">Short chain dehydrogenase; part of the gene cluster that mediates the biosynthesis of sirodesmin PL, an epipolythiodioxopiperazine (ETP) characterized by a disulfide bridged cyclic dipeptide and that acts as a phytotoxin which is involved in the blackleg didease of canola (PubMed:15387811, PubMed:18272357, PubMed:19762440). SirD catalyzes the O-prenylation of L-tyrosine (L-Tyr) in the presence of dimethylallyl diphosphate (DMAPP) to yield 4-O-dimethylallyl-L-Tyr, and therefore represents probably the first pathway-specific enzyme in the biosynthesis of sirodesmin PL (PubMed:19762440, PubMed:21038099, PubMed:24083562). 4-O-dimethylallyl-L-Tyr, then undergoes condensation with L-Ser in a reaction catalyzed by the non-ribosomal peptide synthase sirP to form the diketopiperazine (DKP) backbone (PubMed:18272357). Further bishydroxylation of the DKP performed by the cytochrome P450 monooxygenase sirC leads to the production of the intermediate phomamide (PubMed:27390873). This step is essential to form the reactive thiol group required for toxicity of sirodesmin PL (PubMed:27390873). The next steps of sirodesmin biosynthesis are not well understood yet, but some predictions could be made from intermediate compounds identification (PubMed:18272357). Phomamide is converted into phomalizarine via oxidation, probably by sirT (PubMed:18272357). Further oxidation, methylation (by sirM or sirN) and reduction steps convert phomalizarine to deacetyl sirodesmin (PubMed:18272357). Finally, acetyltransferase sirH probably acetylates deacetyl sirodesmin to produce sirodesmin PL (PubMed:18272357).</text>
</comment>
<comment type="pathway">
    <text evidence="10">Mycotoxin biosynthesis.</text>
</comment>
<comment type="similarity">
    <text evidence="9">Belongs to the short-chain dehydrogenases/reductases (SDR) family. Highly divergent.</text>
</comment>
<comment type="caution">
    <text evidence="9">It is uncertain whether sirS is an active short chain dehydrogenase since it lacks the conserved active sites.</text>
</comment>
<dbReference type="EC" id="1.-.-.-" evidence="9"/>
<dbReference type="EMBL" id="AY553235">
    <property type="protein sequence ID" value="AAS92550.1"/>
    <property type="molecule type" value="Genomic_DNA"/>
</dbReference>
<dbReference type="RefSeq" id="XP_003842416.1">
    <property type="nucleotide sequence ID" value="XM_003842368.1"/>
</dbReference>
<dbReference type="SMR" id="Q6Q878"/>
<dbReference type="OMA" id="RRHENNF"/>
<dbReference type="GO" id="GO:0016491">
    <property type="term" value="F:oxidoreductase activity"/>
    <property type="evidence" value="ECO:0007669"/>
    <property type="project" value="UniProtKB-KW"/>
</dbReference>
<dbReference type="CDD" id="cd08948">
    <property type="entry name" value="5beta-POR_like_SDR_a"/>
    <property type="match status" value="1"/>
</dbReference>
<dbReference type="Gene3D" id="3.40.50.720">
    <property type="entry name" value="NAD(P)-binding Rossmann-like Domain"/>
    <property type="match status" value="1"/>
</dbReference>
<dbReference type="InterPro" id="IPR036291">
    <property type="entry name" value="NAD(P)-bd_dom_sf"/>
</dbReference>
<dbReference type="InterPro" id="IPR055222">
    <property type="entry name" value="PRISE-like_Rossmann-fold"/>
</dbReference>
<dbReference type="PANTHER" id="PTHR32487">
    <property type="entry name" value="3-OXO-DELTA(4,5)-STEROID 5-BETA-REDUCTASE"/>
    <property type="match status" value="1"/>
</dbReference>
<dbReference type="PANTHER" id="PTHR32487:SF8">
    <property type="entry name" value="NAD-DEPENDENT EPIMERASE_DEHYDRATASE DOMAIN-CONTAINING PROTEIN"/>
    <property type="match status" value="1"/>
</dbReference>
<dbReference type="Pfam" id="PF22917">
    <property type="entry name" value="PRISE"/>
    <property type="match status" value="1"/>
</dbReference>
<dbReference type="SUPFAM" id="SSF51735">
    <property type="entry name" value="NAD(P)-binding Rossmann-fold domains"/>
    <property type="match status" value="1"/>
</dbReference>
<protein>
    <recommendedName>
        <fullName evidence="9">Short chain dehydrogenase sirS</fullName>
        <ecNumber evidence="9">1.-.-.-</ecNumber>
    </recommendedName>
    <alternativeName>
        <fullName evidence="8">Sirodesmin biosynthesis protein S</fullName>
    </alternativeName>
</protein>
<gene>
    <name evidence="8" type="primary">sirS</name>
</gene>
<feature type="chain" id="PRO_0000437715" description="Short chain dehydrogenase sirS">
    <location>
        <begin position="1"/>
        <end position="409"/>
    </location>
</feature>
<feature type="region of interest" description="Disordered" evidence="3">
    <location>
        <begin position="306"/>
        <end position="332"/>
    </location>
</feature>
<feature type="binding site" evidence="1">
    <location>
        <position position="49"/>
    </location>
    <ligand>
        <name>NADP(+)</name>
        <dbReference type="ChEBI" id="CHEBI:58349"/>
    </ligand>
</feature>
<feature type="binding site" evidence="1">
    <location>
        <position position="68"/>
    </location>
    <ligand>
        <name>NADP(+)</name>
        <dbReference type="ChEBI" id="CHEBI:58349"/>
    </ligand>
</feature>
<feature type="binding site" evidence="1">
    <location>
        <position position="195"/>
    </location>
    <ligand>
        <name>NADP(+)</name>
        <dbReference type="ChEBI" id="CHEBI:58349"/>
    </ligand>
</feature>
<feature type="binding site" evidence="1">
    <location>
        <position position="288"/>
    </location>
    <ligand>
        <name>NADP(+)</name>
        <dbReference type="ChEBI" id="CHEBI:58349"/>
    </ligand>
</feature>
<feature type="binding site" evidence="1">
    <location>
        <position position="290"/>
    </location>
    <ligand>
        <name>NADP(+)</name>
        <dbReference type="ChEBI" id="CHEBI:58349"/>
    </ligand>
</feature>
<feature type="binding site" evidence="2">
    <location>
        <position position="299"/>
    </location>
    <ligand>
        <name>NADP(+)</name>
        <dbReference type="ChEBI" id="CHEBI:58349"/>
    </ligand>
</feature>
<sequence length="409" mass="44751">MSPSKTTPPSPTALVYGATGVTGWGLCKNLLEQQADSASTPTFSRVIGVCKQPAQDLGLFLEDKRFELVDGVDLLQGEDSVVEVLKEVKGIENVTHVFYVANRNSPSDGPDERISFNVKMIQSAVKAAEQLSSNMQVLIMQTSINVYGIFASLMGGTLTCPSPLVESADRTPSPYREMDVHYAQCDELKRLSKGKSWSWFEVRPDAVIGYVPRRHENNFTVSLGLFLATYAHVHGAGAPVRFPGTPESWKCKFSMVSQDQLARFEIHLATHAEGLQSGEAFNVSNGDVLTWSKLWPEAAARFGLRGVGPEGAGEEEGKGEAEGGAKGATGWSWPLGDETTMKKWEEENQVQKGWGGNLSEVCFVNTMRPTVDRILSLDKAKKIGFEARDDTIAAFDKAWALFKKARILP</sequence>
<reference key="1">
    <citation type="journal article" date="2004" name="Mol. Microbiol.">
        <title>The sirodesmin biosynthetic gene cluster of the plant pathogenic fungus Leptosphaeria maculans.</title>
        <authorList>
            <person name="Gardiner D.M."/>
            <person name="Cozijnsen A.J."/>
            <person name="Wilson L.M."/>
            <person name="Pedras M.S."/>
            <person name="Howlett B.J."/>
        </authorList>
    </citation>
    <scope>NUCLEOTIDE SEQUENCE [GENOMIC DNA]</scope>
    <scope>FUNCTION</scope>
</reference>
<reference key="2">
    <citation type="journal article" date="2008" name="Mycol. Res.">
        <title>Biosynthetic gene clusters for epipolythiodioxopiperazines in filamentous fungi.</title>
        <authorList>
            <person name="Fox E.M."/>
            <person name="Howlett B.J."/>
        </authorList>
    </citation>
    <scope>FUNCTION</scope>
</reference>
<reference key="3">
    <citation type="journal article" date="2010" name="Microbiology">
        <title>A tyrosine O-prenyltransferase catalyses the first pathway-specific step in the biosynthesis of sirodesmin PL.</title>
        <authorList>
            <person name="Kremer A."/>
            <person name="Li S.M."/>
        </authorList>
    </citation>
    <scope>FUNCTION</scope>
</reference>
<reference key="4">
    <citation type="journal article" date="2011" name="Appl. Microbiol. Biotechnol.">
        <title>The tyrosine O-prenyltransferase SirD catalyzes O-, N-, and C-prenylations.</title>
        <authorList>
            <person name="Zou H.X."/>
            <person name="Xie X."/>
            <person name="Zheng X.D."/>
            <person name="Li S.M."/>
        </authorList>
    </citation>
    <scope>FUNCTION</scope>
</reference>
<reference key="5">
    <citation type="journal article" date="2013" name="ACS Chem. Biol.">
        <title>Tyrosine O-prenyltransferase SirD catalyzes S-, C-, and N-prenylations on tyrosine and tryptophan derivatives.</title>
        <authorList>
            <person name="Rudolf J.D."/>
            <person name="Poulter C.D."/>
        </authorList>
    </citation>
    <scope>FUNCTION</scope>
</reference>
<reference key="6">
    <citation type="journal article" date="2016" name="PLoS ONE">
        <title>The epipolythiodiketopiperazine gene cluster in Claviceps purpurea: dysfunctional cytochrome P450 enzyme prevents formation of the previously unknown clapurines.</title>
        <authorList>
            <person name="Dopstadt J."/>
            <person name="Neubauer L."/>
            <person name="Tudzynski P."/>
            <person name="Humpf H.U."/>
        </authorList>
    </citation>
    <scope>FUNCTION</scope>
</reference>
<proteinExistence type="inferred from homology"/>